<sequence>MVHFTAEEKSTILSLWGKVNVEEAGGEALGRLLVVYPWTQRFFDSFGNLSSASAIMGNPKVKAHGKKVLTSFGEAVKNMDNLKGAFAKLSELHCDKLHVDPENFKLLGNVMVIILATHFGKEFTPDVQAAWQKLVSGVATALAHKYH</sequence>
<name>HBE_CHEME</name>
<feature type="chain" id="PRO_0000053204" description="Hemoglobin subunit epsilon">
    <location>
        <begin position="1"/>
        <end position="147"/>
    </location>
</feature>
<feature type="domain" description="Globin" evidence="2">
    <location>
        <begin position="3"/>
        <end position="147"/>
    </location>
</feature>
<feature type="binding site" description="distal binding residue" evidence="2">
    <location>
        <position position="64"/>
    </location>
    <ligand>
        <name>heme b</name>
        <dbReference type="ChEBI" id="CHEBI:60344"/>
    </ligand>
    <ligandPart>
        <name>Fe</name>
        <dbReference type="ChEBI" id="CHEBI:18248"/>
    </ligandPart>
</feature>
<feature type="binding site" description="proximal binding residue" evidence="2">
    <location>
        <position position="93"/>
    </location>
    <ligand>
        <name>heme b</name>
        <dbReference type="ChEBI" id="CHEBI:60344"/>
    </ligand>
    <ligandPart>
        <name>Fe</name>
        <dbReference type="ChEBI" id="CHEBI:18248"/>
    </ligandPart>
</feature>
<feature type="modified residue" description="Phosphoserine" evidence="1">
    <location>
        <position position="14"/>
    </location>
</feature>
<feature type="modified residue" description="Phosphoserine" evidence="1">
    <location>
        <position position="51"/>
    </location>
</feature>
<keyword id="KW-0349">Heme</keyword>
<keyword id="KW-0408">Iron</keyword>
<keyword id="KW-0479">Metal-binding</keyword>
<keyword id="KW-0561">Oxygen transport</keyword>
<keyword id="KW-0597">Phosphoprotein</keyword>
<keyword id="KW-0813">Transport</keyword>
<gene>
    <name type="primary">HBE1</name>
</gene>
<dbReference type="EMBL" id="U11711">
    <property type="protein sequence ID" value="AAA80178.1"/>
    <property type="molecule type" value="Genomic_DNA"/>
</dbReference>
<dbReference type="PIR" id="I37011">
    <property type="entry name" value="I37011"/>
</dbReference>
<dbReference type="SMR" id="Q28338"/>
<dbReference type="OrthoDB" id="9886081at2759"/>
<dbReference type="GO" id="GO:0072562">
    <property type="term" value="C:blood microparticle"/>
    <property type="evidence" value="ECO:0007669"/>
    <property type="project" value="TreeGrafter"/>
</dbReference>
<dbReference type="GO" id="GO:0031838">
    <property type="term" value="C:haptoglobin-hemoglobin complex"/>
    <property type="evidence" value="ECO:0007669"/>
    <property type="project" value="TreeGrafter"/>
</dbReference>
<dbReference type="GO" id="GO:0005833">
    <property type="term" value="C:hemoglobin complex"/>
    <property type="evidence" value="ECO:0007669"/>
    <property type="project" value="InterPro"/>
</dbReference>
<dbReference type="GO" id="GO:0031720">
    <property type="term" value="F:haptoglobin binding"/>
    <property type="evidence" value="ECO:0007669"/>
    <property type="project" value="TreeGrafter"/>
</dbReference>
<dbReference type="GO" id="GO:0020037">
    <property type="term" value="F:heme binding"/>
    <property type="evidence" value="ECO:0007669"/>
    <property type="project" value="InterPro"/>
</dbReference>
<dbReference type="GO" id="GO:0031721">
    <property type="term" value="F:hemoglobin alpha binding"/>
    <property type="evidence" value="ECO:0007669"/>
    <property type="project" value="TreeGrafter"/>
</dbReference>
<dbReference type="GO" id="GO:0046872">
    <property type="term" value="F:metal ion binding"/>
    <property type="evidence" value="ECO:0007669"/>
    <property type="project" value="UniProtKB-KW"/>
</dbReference>
<dbReference type="GO" id="GO:0043177">
    <property type="term" value="F:organic acid binding"/>
    <property type="evidence" value="ECO:0007669"/>
    <property type="project" value="TreeGrafter"/>
</dbReference>
<dbReference type="GO" id="GO:0019825">
    <property type="term" value="F:oxygen binding"/>
    <property type="evidence" value="ECO:0007669"/>
    <property type="project" value="InterPro"/>
</dbReference>
<dbReference type="GO" id="GO:0005344">
    <property type="term" value="F:oxygen carrier activity"/>
    <property type="evidence" value="ECO:0007669"/>
    <property type="project" value="UniProtKB-KW"/>
</dbReference>
<dbReference type="GO" id="GO:0004601">
    <property type="term" value="F:peroxidase activity"/>
    <property type="evidence" value="ECO:0007669"/>
    <property type="project" value="TreeGrafter"/>
</dbReference>
<dbReference type="GO" id="GO:0042744">
    <property type="term" value="P:hydrogen peroxide catabolic process"/>
    <property type="evidence" value="ECO:0007669"/>
    <property type="project" value="TreeGrafter"/>
</dbReference>
<dbReference type="CDD" id="cd08925">
    <property type="entry name" value="Hb-beta-like"/>
    <property type="match status" value="1"/>
</dbReference>
<dbReference type="FunFam" id="1.10.490.10:FF:000001">
    <property type="entry name" value="Hemoglobin subunit beta"/>
    <property type="match status" value="1"/>
</dbReference>
<dbReference type="Gene3D" id="1.10.490.10">
    <property type="entry name" value="Globins"/>
    <property type="match status" value="1"/>
</dbReference>
<dbReference type="InterPro" id="IPR000971">
    <property type="entry name" value="Globin"/>
</dbReference>
<dbReference type="InterPro" id="IPR009050">
    <property type="entry name" value="Globin-like_sf"/>
</dbReference>
<dbReference type="InterPro" id="IPR012292">
    <property type="entry name" value="Globin/Proto"/>
</dbReference>
<dbReference type="InterPro" id="IPR002337">
    <property type="entry name" value="Hemoglobin_b"/>
</dbReference>
<dbReference type="InterPro" id="IPR050056">
    <property type="entry name" value="Hemoglobin_oxygen_transport"/>
</dbReference>
<dbReference type="PANTHER" id="PTHR11442">
    <property type="entry name" value="HEMOGLOBIN FAMILY MEMBER"/>
    <property type="match status" value="1"/>
</dbReference>
<dbReference type="PANTHER" id="PTHR11442:SF7">
    <property type="entry name" value="HEMOGLOBIN SUBUNIT EPSILON"/>
    <property type="match status" value="1"/>
</dbReference>
<dbReference type="Pfam" id="PF00042">
    <property type="entry name" value="Globin"/>
    <property type="match status" value="1"/>
</dbReference>
<dbReference type="PRINTS" id="PR00814">
    <property type="entry name" value="BETAHAEM"/>
</dbReference>
<dbReference type="SUPFAM" id="SSF46458">
    <property type="entry name" value="Globin-like"/>
    <property type="match status" value="1"/>
</dbReference>
<dbReference type="PROSITE" id="PS01033">
    <property type="entry name" value="GLOBIN"/>
    <property type="match status" value="1"/>
</dbReference>
<accession>Q28338</accession>
<organism>
    <name type="scientific">Cheirogaleus medius</name>
    <name type="common">Fat-tailed dwarf lemur</name>
    <dbReference type="NCBI Taxonomy" id="9460"/>
    <lineage>
        <taxon>Eukaryota</taxon>
        <taxon>Metazoa</taxon>
        <taxon>Chordata</taxon>
        <taxon>Craniata</taxon>
        <taxon>Vertebrata</taxon>
        <taxon>Euteleostomi</taxon>
        <taxon>Mammalia</taxon>
        <taxon>Eutheria</taxon>
        <taxon>Euarchontoglires</taxon>
        <taxon>Primates</taxon>
        <taxon>Strepsirrhini</taxon>
        <taxon>Lemuriformes</taxon>
        <taxon>Cheirogaleidae</taxon>
        <taxon>Cheirogaleus</taxon>
    </lineage>
</organism>
<comment type="function">
    <text>The epsilon chain is a beta-type chain of early mammalian embryonic hemoglobin.</text>
</comment>
<comment type="subunit">
    <text>Heterotetramer of two alpha chains and two epsilon chains in early embryonic hemoglobin Gower-2; two zeta chains and two epsilon chains in early embryonic hemoglobin Gower-1.</text>
</comment>
<comment type="tissue specificity">
    <text>Red blood cells.</text>
</comment>
<comment type="similarity">
    <text evidence="2">Belongs to the globin family.</text>
</comment>
<proteinExistence type="evidence at transcript level"/>
<protein>
    <recommendedName>
        <fullName>Hemoglobin subunit epsilon</fullName>
    </recommendedName>
    <alternativeName>
        <fullName>Epsilon-globin</fullName>
    </alternativeName>
    <alternativeName>
        <fullName>Hemoglobin epsilon chain</fullName>
    </alternativeName>
</protein>
<evidence type="ECO:0000250" key="1">
    <source>
        <dbReference type="UniProtKB" id="P02100"/>
    </source>
</evidence>
<evidence type="ECO:0000255" key="2">
    <source>
        <dbReference type="PROSITE-ProRule" id="PRU00238"/>
    </source>
</evidence>
<reference key="1">
    <citation type="journal article" date="1995" name="J. Mol. Evol.">
        <title>Evidence on primate phylogeny from epsilon-globin gene sequences and flanking regions.</title>
        <authorList>
            <person name="Porter C.A."/>
            <person name="Sampaio I."/>
            <person name="Schneider H."/>
            <person name="Schneider M.P.C."/>
            <person name="Czelusniak J."/>
            <person name="Goodman M."/>
        </authorList>
    </citation>
    <scope>NUCLEOTIDE SEQUENCE [GENOMIC DNA]</scope>
</reference>